<dbReference type="EC" id="6.5.1.1" evidence="5"/>
<dbReference type="EMBL" id="JH000021">
    <property type="protein sequence ID" value="EGW00081.1"/>
    <property type="molecule type" value="Genomic_DNA"/>
</dbReference>
<dbReference type="RefSeq" id="XP_003495812.1">
    <property type="nucleotide sequence ID" value="XM_003495764.3"/>
</dbReference>
<dbReference type="SMR" id="G3GTP0"/>
<dbReference type="FunCoup" id="G3GTP0">
    <property type="interactions" value="1830"/>
</dbReference>
<dbReference type="STRING" id="10029.G3GTP0"/>
<dbReference type="PaxDb" id="10029-XP_007634008.1"/>
<dbReference type="Ensembl" id="ENSCGRT00001014315.1">
    <property type="protein sequence ID" value="ENSCGRP00001010095.1"/>
    <property type="gene ID" value="ENSCGRG00001012072.1"/>
</dbReference>
<dbReference type="GeneID" id="100754640"/>
<dbReference type="CTD" id="3981"/>
<dbReference type="eggNOG" id="KOG0966">
    <property type="taxonomic scope" value="Eukaryota"/>
</dbReference>
<dbReference type="GeneTree" id="ENSGT00860000133881"/>
<dbReference type="InParanoid" id="G3GTP0"/>
<dbReference type="OMA" id="EGIMIKH"/>
<dbReference type="OrthoDB" id="151490at2759"/>
<dbReference type="Proteomes" id="UP000001075">
    <property type="component" value="Unassembled WGS sequence"/>
</dbReference>
<dbReference type="Proteomes" id="UP000694386">
    <property type="component" value="Unplaced"/>
</dbReference>
<dbReference type="Proteomes" id="UP001108280">
    <property type="component" value="Unplaced"/>
</dbReference>
<dbReference type="GO" id="GO:0000793">
    <property type="term" value="C:condensed chromosome"/>
    <property type="evidence" value="ECO:0007669"/>
    <property type="project" value="Ensembl"/>
</dbReference>
<dbReference type="GO" id="GO:0032807">
    <property type="term" value="C:DNA ligase IV complex"/>
    <property type="evidence" value="ECO:0007669"/>
    <property type="project" value="Ensembl"/>
</dbReference>
<dbReference type="GO" id="GO:0005958">
    <property type="term" value="C:DNA-dependent protein kinase-DNA ligase 4 complex"/>
    <property type="evidence" value="ECO:0000250"/>
    <property type="project" value="UniProtKB"/>
</dbReference>
<dbReference type="GO" id="GO:0005654">
    <property type="term" value="C:nucleoplasm"/>
    <property type="evidence" value="ECO:0007669"/>
    <property type="project" value="Ensembl"/>
</dbReference>
<dbReference type="GO" id="GO:0005524">
    <property type="term" value="F:ATP binding"/>
    <property type="evidence" value="ECO:0007669"/>
    <property type="project" value="UniProtKB-KW"/>
</dbReference>
<dbReference type="GO" id="GO:0003677">
    <property type="term" value="F:DNA binding"/>
    <property type="evidence" value="ECO:0007669"/>
    <property type="project" value="Ensembl"/>
</dbReference>
<dbReference type="GO" id="GO:0003910">
    <property type="term" value="F:DNA ligase (ATP) activity"/>
    <property type="evidence" value="ECO:0007669"/>
    <property type="project" value="UniProtKB-EC"/>
</dbReference>
<dbReference type="GO" id="GO:0000287">
    <property type="term" value="F:magnesium ion binding"/>
    <property type="evidence" value="ECO:0007669"/>
    <property type="project" value="Ensembl"/>
</dbReference>
<dbReference type="GO" id="GO:0006284">
    <property type="term" value="P:base-excision repair"/>
    <property type="evidence" value="ECO:0007669"/>
    <property type="project" value="Ensembl"/>
</dbReference>
<dbReference type="GO" id="GO:0051301">
    <property type="term" value="P:cell division"/>
    <property type="evidence" value="ECO:0007669"/>
    <property type="project" value="UniProtKB-KW"/>
</dbReference>
<dbReference type="GO" id="GO:0071479">
    <property type="term" value="P:cellular response to ionizing radiation"/>
    <property type="evidence" value="ECO:0007669"/>
    <property type="project" value="Ensembl"/>
</dbReference>
<dbReference type="GO" id="GO:0007417">
    <property type="term" value="P:central nervous system development"/>
    <property type="evidence" value="ECO:0007669"/>
    <property type="project" value="Ensembl"/>
</dbReference>
<dbReference type="GO" id="GO:0051276">
    <property type="term" value="P:chromosome organization"/>
    <property type="evidence" value="ECO:0007669"/>
    <property type="project" value="Ensembl"/>
</dbReference>
<dbReference type="GO" id="GO:1904155">
    <property type="term" value="P:DN2 thymocyte differentiation"/>
    <property type="evidence" value="ECO:0007669"/>
    <property type="project" value="Ensembl"/>
</dbReference>
<dbReference type="GO" id="GO:0071897">
    <property type="term" value="P:DNA biosynthetic process"/>
    <property type="evidence" value="ECO:0007669"/>
    <property type="project" value="InterPro"/>
</dbReference>
<dbReference type="GO" id="GO:0097680">
    <property type="term" value="P:double-strand break repair via classical nonhomologous end joining"/>
    <property type="evidence" value="ECO:0007669"/>
    <property type="project" value="Ensembl"/>
</dbReference>
<dbReference type="GO" id="GO:0048144">
    <property type="term" value="P:fibroblast proliferation"/>
    <property type="evidence" value="ECO:0007669"/>
    <property type="project" value="Ensembl"/>
</dbReference>
<dbReference type="GO" id="GO:0033152">
    <property type="term" value="P:immunoglobulin V(D)J recombination"/>
    <property type="evidence" value="ECO:0007669"/>
    <property type="project" value="Ensembl"/>
</dbReference>
<dbReference type="GO" id="GO:0001701">
    <property type="term" value="P:in utero embryonic development"/>
    <property type="evidence" value="ECO:0007669"/>
    <property type="project" value="Ensembl"/>
</dbReference>
<dbReference type="GO" id="GO:0045190">
    <property type="term" value="P:isotype switching"/>
    <property type="evidence" value="ECO:0007669"/>
    <property type="project" value="Ensembl"/>
</dbReference>
<dbReference type="GO" id="GO:0043524">
    <property type="term" value="P:negative regulation of neuron apoptotic process"/>
    <property type="evidence" value="ECO:0007669"/>
    <property type="project" value="Ensembl"/>
</dbReference>
<dbReference type="GO" id="GO:0022008">
    <property type="term" value="P:neurogenesis"/>
    <property type="evidence" value="ECO:0007669"/>
    <property type="project" value="Ensembl"/>
</dbReference>
<dbReference type="GO" id="GO:0051402">
    <property type="term" value="P:neuron apoptotic process"/>
    <property type="evidence" value="ECO:0007669"/>
    <property type="project" value="Ensembl"/>
</dbReference>
<dbReference type="GO" id="GO:0006297">
    <property type="term" value="P:nucleotide-excision repair, DNA gap filling"/>
    <property type="evidence" value="ECO:0007669"/>
    <property type="project" value="Ensembl"/>
</dbReference>
<dbReference type="GO" id="GO:2001252">
    <property type="term" value="P:positive regulation of chromosome organization"/>
    <property type="evidence" value="ECO:0007669"/>
    <property type="project" value="Ensembl"/>
</dbReference>
<dbReference type="GO" id="GO:0048146">
    <property type="term" value="P:positive regulation of fibroblast proliferation"/>
    <property type="evidence" value="ECO:0007669"/>
    <property type="project" value="Ensembl"/>
</dbReference>
<dbReference type="GO" id="GO:0050769">
    <property type="term" value="P:positive regulation of neurogenesis"/>
    <property type="evidence" value="ECO:0007669"/>
    <property type="project" value="Ensembl"/>
</dbReference>
<dbReference type="GO" id="GO:0002328">
    <property type="term" value="P:pro-B cell differentiation"/>
    <property type="evidence" value="ECO:0007669"/>
    <property type="project" value="Ensembl"/>
</dbReference>
<dbReference type="GO" id="GO:0010332">
    <property type="term" value="P:response to gamma radiation"/>
    <property type="evidence" value="ECO:0007669"/>
    <property type="project" value="Ensembl"/>
</dbReference>
<dbReference type="GO" id="GO:0010165">
    <property type="term" value="P:response to X-ray"/>
    <property type="evidence" value="ECO:0007669"/>
    <property type="project" value="Ensembl"/>
</dbReference>
<dbReference type="GO" id="GO:0000012">
    <property type="term" value="P:single strand break repair"/>
    <property type="evidence" value="ECO:0007669"/>
    <property type="project" value="Ensembl"/>
</dbReference>
<dbReference type="GO" id="GO:0035019">
    <property type="term" value="P:somatic stem cell population maintenance"/>
    <property type="evidence" value="ECO:0007669"/>
    <property type="project" value="Ensembl"/>
</dbReference>
<dbReference type="GO" id="GO:0072089">
    <property type="term" value="P:stem cell proliferation"/>
    <property type="evidence" value="ECO:0007669"/>
    <property type="project" value="Ensembl"/>
</dbReference>
<dbReference type="GO" id="GO:0033153">
    <property type="term" value="P:T cell receptor V(D)J recombination"/>
    <property type="evidence" value="ECO:0007669"/>
    <property type="project" value="Ensembl"/>
</dbReference>
<dbReference type="CDD" id="cd07903">
    <property type="entry name" value="Adenylation_DNA_ligase_IV"/>
    <property type="match status" value="1"/>
</dbReference>
<dbReference type="CDD" id="cd17722">
    <property type="entry name" value="BRCT_DNA_ligase_IV_rpt1"/>
    <property type="match status" value="1"/>
</dbReference>
<dbReference type="CDD" id="cd17717">
    <property type="entry name" value="BRCT_DNA_ligase_IV_rpt2"/>
    <property type="match status" value="1"/>
</dbReference>
<dbReference type="CDD" id="cd07968">
    <property type="entry name" value="OBF_DNA_ligase_IV"/>
    <property type="match status" value="1"/>
</dbReference>
<dbReference type="FunFam" id="1.10.3260.10:FF:000003">
    <property type="entry name" value="DNA ligase"/>
    <property type="match status" value="1"/>
</dbReference>
<dbReference type="FunFam" id="2.40.50.140:FF:000150">
    <property type="entry name" value="DNA ligase"/>
    <property type="match status" value="1"/>
</dbReference>
<dbReference type="FunFam" id="3.30.470.30:FF:000008">
    <property type="entry name" value="DNA ligase"/>
    <property type="match status" value="1"/>
</dbReference>
<dbReference type="FunFam" id="3.40.50.10190:FF:000027">
    <property type="entry name" value="DNA ligase"/>
    <property type="match status" value="1"/>
</dbReference>
<dbReference type="FunFam" id="3.40.50.10190:FF:000050">
    <property type="entry name" value="DNA ligase"/>
    <property type="match status" value="1"/>
</dbReference>
<dbReference type="Gene3D" id="6.10.250.520">
    <property type="match status" value="1"/>
</dbReference>
<dbReference type="Gene3D" id="3.40.50.10190">
    <property type="entry name" value="BRCT domain"/>
    <property type="match status" value="2"/>
</dbReference>
<dbReference type="Gene3D" id="1.10.3260.10">
    <property type="entry name" value="DNA ligase, ATP-dependent, N-terminal domain"/>
    <property type="match status" value="1"/>
</dbReference>
<dbReference type="Gene3D" id="3.30.470.30">
    <property type="entry name" value="DNA ligase/mRNA capping enzyme"/>
    <property type="match status" value="1"/>
</dbReference>
<dbReference type="Gene3D" id="2.40.50.140">
    <property type="entry name" value="Nucleic acid-binding proteins"/>
    <property type="match status" value="1"/>
</dbReference>
<dbReference type="InterPro" id="IPR044125">
    <property type="entry name" value="Adenylation_DNA_ligase_IV"/>
</dbReference>
<dbReference type="InterPro" id="IPR001357">
    <property type="entry name" value="BRCT_dom"/>
</dbReference>
<dbReference type="InterPro" id="IPR036420">
    <property type="entry name" value="BRCT_dom_sf"/>
</dbReference>
<dbReference type="InterPro" id="IPR000977">
    <property type="entry name" value="DNA_ligase_ATP-dep"/>
</dbReference>
<dbReference type="InterPro" id="IPR012309">
    <property type="entry name" value="DNA_ligase_ATP-dep_C"/>
</dbReference>
<dbReference type="InterPro" id="IPR012310">
    <property type="entry name" value="DNA_ligase_ATP-dep_cent"/>
</dbReference>
<dbReference type="InterPro" id="IPR016059">
    <property type="entry name" value="DNA_ligase_ATP-dep_CS"/>
</dbReference>
<dbReference type="InterPro" id="IPR012308">
    <property type="entry name" value="DNA_ligase_ATP-dep_N"/>
</dbReference>
<dbReference type="InterPro" id="IPR021536">
    <property type="entry name" value="DNA_ligase_IV_dom"/>
</dbReference>
<dbReference type="InterPro" id="IPR036599">
    <property type="entry name" value="DNA_ligase_N_sf"/>
</dbReference>
<dbReference type="InterPro" id="IPR029710">
    <property type="entry name" value="LIG4"/>
</dbReference>
<dbReference type="InterPro" id="IPR012340">
    <property type="entry name" value="NA-bd_OB-fold"/>
</dbReference>
<dbReference type="NCBIfam" id="TIGR00574">
    <property type="entry name" value="dnl1"/>
    <property type="match status" value="1"/>
</dbReference>
<dbReference type="PANTHER" id="PTHR45997">
    <property type="entry name" value="DNA LIGASE 4"/>
    <property type="match status" value="1"/>
</dbReference>
<dbReference type="PANTHER" id="PTHR45997:SF1">
    <property type="entry name" value="DNA LIGASE 4"/>
    <property type="match status" value="1"/>
</dbReference>
<dbReference type="Pfam" id="PF00533">
    <property type="entry name" value="BRCT"/>
    <property type="match status" value="2"/>
</dbReference>
<dbReference type="Pfam" id="PF04679">
    <property type="entry name" value="DNA_ligase_A_C"/>
    <property type="match status" value="1"/>
</dbReference>
<dbReference type="Pfam" id="PF01068">
    <property type="entry name" value="DNA_ligase_A_M"/>
    <property type="match status" value="1"/>
</dbReference>
<dbReference type="Pfam" id="PF04675">
    <property type="entry name" value="DNA_ligase_A_N"/>
    <property type="match status" value="1"/>
</dbReference>
<dbReference type="Pfam" id="PF11411">
    <property type="entry name" value="DNA_ligase_IV"/>
    <property type="match status" value="1"/>
</dbReference>
<dbReference type="SMART" id="SM00292">
    <property type="entry name" value="BRCT"/>
    <property type="match status" value="2"/>
</dbReference>
<dbReference type="SUPFAM" id="SSF117018">
    <property type="entry name" value="ATP-dependent DNA ligase DNA-binding domain"/>
    <property type="match status" value="1"/>
</dbReference>
<dbReference type="SUPFAM" id="SSF52113">
    <property type="entry name" value="BRCT domain"/>
    <property type="match status" value="2"/>
</dbReference>
<dbReference type="SUPFAM" id="SSF56091">
    <property type="entry name" value="DNA ligase/mRNA capping enzyme, catalytic domain"/>
    <property type="match status" value="1"/>
</dbReference>
<dbReference type="SUPFAM" id="SSF50249">
    <property type="entry name" value="Nucleic acid-binding proteins"/>
    <property type="match status" value="1"/>
</dbReference>
<dbReference type="PROSITE" id="PS50172">
    <property type="entry name" value="BRCT"/>
    <property type="match status" value="2"/>
</dbReference>
<dbReference type="PROSITE" id="PS00697">
    <property type="entry name" value="DNA_LIGASE_A1"/>
    <property type="match status" value="1"/>
</dbReference>
<dbReference type="PROSITE" id="PS00333">
    <property type="entry name" value="DNA_LIGASE_A2"/>
    <property type="match status" value="1"/>
</dbReference>
<dbReference type="PROSITE" id="PS50160">
    <property type="entry name" value="DNA_LIGASE_A3"/>
    <property type="match status" value="1"/>
</dbReference>
<accession>G3GTP0</accession>
<organism>
    <name type="scientific">Cricetulus griseus</name>
    <name type="common">Chinese hamster</name>
    <name type="synonym">Cricetulus barabensis griseus</name>
    <dbReference type="NCBI Taxonomy" id="10029"/>
    <lineage>
        <taxon>Eukaryota</taxon>
        <taxon>Metazoa</taxon>
        <taxon>Chordata</taxon>
        <taxon>Craniata</taxon>
        <taxon>Vertebrata</taxon>
        <taxon>Euteleostomi</taxon>
        <taxon>Mammalia</taxon>
        <taxon>Eutheria</taxon>
        <taxon>Euarchontoglires</taxon>
        <taxon>Glires</taxon>
        <taxon>Rodentia</taxon>
        <taxon>Myomorpha</taxon>
        <taxon>Muroidea</taxon>
        <taxon>Cricetidae</taxon>
        <taxon>Cricetinae</taxon>
        <taxon>Cricetulus</taxon>
    </lineage>
</organism>
<name>DNLI4_CRIGR</name>
<proteinExistence type="evidence at protein level"/>
<keyword id="KW-0067">ATP-binding</keyword>
<keyword id="KW-0131">Cell cycle</keyword>
<keyword id="KW-0132">Cell division</keyword>
<keyword id="KW-0227">DNA damage</keyword>
<keyword id="KW-0233">DNA recombination</keyword>
<keyword id="KW-0234">DNA repair</keyword>
<keyword id="KW-0436">Ligase</keyword>
<keyword id="KW-0460">Magnesium</keyword>
<keyword id="KW-0479">Metal-binding</keyword>
<keyword id="KW-0547">Nucleotide-binding</keyword>
<keyword id="KW-0539">Nucleus</keyword>
<keyword id="KW-1185">Reference proteome</keyword>
<keyword id="KW-0677">Repeat</keyword>
<protein>
    <recommendedName>
        <fullName evidence="9">DNA ligase 4</fullName>
        <ecNumber evidence="5">6.5.1.1</ecNumber>
    </recommendedName>
    <alternativeName>
        <fullName evidence="7">DNA ligase IV</fullName>
    </alternativeName>
    <alternativeName>
        <fullName>Polydeoxyribonucleotide synthase [ATP] 4</fullName>
    </alternativeName>
</protein>
<evidence type="ECO:0000250" key="1">
    <source>
        <dbReference type="UniProtKB" id="P18858"/>
    </source>
</evidence>
<evidence type="ECO:0000250" key="2">
    <source>
        <dbReference type="UniProtKB" id="P49917"/>
    </source>
</evidence>
<evidence type="ECO:0000255" key="3"/>
<evidence type="ECO:0000255" key="4">
    <source>
        <dbReference type="PROSITE-ProRule" id="PRU00033"/>
    </source>
</evidence>
<evidence type="ECO:0000255" key="5">
    <source>
        <dbReference type="PROSITE-ProRule" id="PRU10135"/>
    </source>
</evidence>
<evidence type="ECO:0000269" key="6">
    <source>
    </source>
</evidence>
<evidence type="ECO:0000303" key="7">
    <source>
    </source>
</evidence>
<evidence type="ECO:0000303" key="8">
    <source>
    </source>
</evidence>
<evidence type="ECO:0000305" key="9"/>
<comment type="function">
    <text evidence="2">DNA ligase involved in DNA non-homologous end joining (NHEJ); required for double-strand break (DSB) repair and V(D)J recombination. Catalyzes the NHEJ ligation step of the broken DNA during DSB repair by resealing the DNA breaks after the gap filling is completed. Joins single-strand breaks in a double-stranded polydeoxynucleotide in an ATP-dependent reaction. LIG4 is mechanistically flexible: it can ligate nicks as well as compatible DNA overhangs alone, while in the presence of XRCC4, it can ligate ends with 2-nucleotides (nt) microhomology and 1-nt gaps. Forms a subcomplex with XRCC4; the LIG4-XRCC4 subcomplex is responsible for the NHEJ ligation step and XRCC4 enhances the joining activity of LIG4. Binding of the LIG4-XRCC4 complex to DNA ends is dependent on the assembly of the DNA-dependent protein kinase complex DNA-PK to these DNA ends. LIG4 regulates nuclear localization of XRCC4.</text>
</comment>
<comment type="catalytic activity">
    <reaction evidence="5">
        <text>ATP + (deoxyribonucleotide)n-3'-hydroxyl + 5'-phospho-(deoxyribonucleotide)m = (deoxyribonucleotide)n+m + AMP + diphosphate.</text>
        <dbReference type="EC" id="6.5.1.1"/>
    </reaction>
</comment>
<comment type="cofactor">
    <cofactor evidence="2">
        <name>Mg(2+)</name>
        <dbReference type="ChEBI" id="CHEBI:18420"/>
    </cofactor>
</comment>
<comment type="subunit">
    <text evidence="2 6">Interacts with XRCC4; the LIG4-XRCC4 subcomplex has a 1:2 stoichiometry and XRCC4 is required for LIG4 stability (PubMed:10047779). Component of the core long-range non-homologous end joining (NHEJ) complex (also named DNA-PK complex) composed of PRKDC, LIG4, XRCC4, XRCC6/Ku70, XRCC5/Ku86 and NHEJ1/XLF (By similarity). Additional component of the NHEJ complex includes PAXX (By similarity). Following autophosphorylation, PRKDC dissociates from DNA, leading to formation of the short-range NHEJ complex, composed of LIG4, XRCC4, XRCC6/Ku70, XRCC5/Ku86 and NHEJ1/XLF (By similarity). Interacts with DCLRE1C; the interaction is direct (By similarity). Interacts with APLF (By similarity).</text>
</comment>
<comment type="subcellular location">
    <subcellularLocation>
        <location evidence="2">Nucleus</location>
    </subcellularLocation>
</comment>
<comment type="similarity">
    <text evidence="9">Belongs to the ATP-dependent DNA ligase family.</text>
</comment>
<gene>
    <name evidence="7" type="primary">LIG4</name>
    <name evidence="8" type="ORF">I79_001027</name>
</gene>
<sequence>MATSQTSQTVAAHVPFADLCSTLERIQKSKERAEKIRHFKEFLDSWRKFHDALHKNKKDVTDSFYPAMRLILPQLERERMAYGIKETMLAKLYIELLNLPREGKDALKLLNYRTPSGARTDAGDFAVIAYFVLKPRCLQKGSLTIQQVNELLDLVASNNSGKRKDLVKKSLLQLITQSSALEQKWLIRMIIKDLKLGVSQQTILNIFHNDAVELHNVTTDLEKVCRQLHDPAVGLSDISITLFSAFKPMLAAVADVERVEKDMKQQSFYIETKLDGERMQMHKDGSVYQYFSRNGYNYTDQFGASPQEGTLTPFIHDAFRTDVQVCILDGEMMAYNPTTQTFMQKGVKFDIKRMVEDSDLQTCYCVFDVLMVNNKKLGRETLRKRYDILNSTFTPIQGRIEIVQKKLAQTKNEVVDALNEAIDKREEGIMIKHPLSIYKPDKRGEGWLKIKPEYVSGLMDELDLLIVGGYWGKGSRGGMMSHFLCAVAEKPPHGEKPSVFHTLCRVGSGYTMKELYDLGLKLAKYWKPFHKKSPPSSILCGTEKPEVYIEPCNSVIVQIKAAEIVPSDMYKTGTTLRFPRIEKIRDDKEWHECMTLGDLEELRGKASGKLATKHLHVGDDDEPREKRRKPVSKMKKTIGIIEHLKAPNLSNISKVSNVFEDVEFCVMSGLDGYPKSDLENRIAEFGGYIVQNPGPDTYCVIAGCENIRVKNIISSDQHDVVKPEWLLECFKTKTCVPWQPRFMIHMCPSTKQHFAREYDCYGDSYFVDTDLDQLKEVFLGIKKAGEHQTPEEMAPVIADLEYRYSWDHSPLCMFRHCTVYLDLYAVINDSSSKIKATRLDVTALELRFHGAKVVSHLSEGVSHVIIGENQSRVSDFKVFRRTLKKKFKILQERWVTDSVDKGELQEENQYLL</sequence>
<feature type="chain" id="PRO_0000453300" description="DNA ligase 4">
    <location>
        <begin position="1"/>
        <end position="912"/>
    </location>
</feature>
<feature type="domain" description="BRCT 1" evidence="4">
    <location>
        <begin position="654"/>
        <end position="743"/>
    </location>
</feature>
<feature type="domain" description="BRCT 2" evidence="4">
    <location>
        <begin position="846"/>
        <end position="912"/>
    </location>
</feature>
<feature type="region of interest" description="Required for catalytic activity" evidence="2">
    <location>
        <begin position="610"/>
        <end position="620"/>
    </location>
</feature>
<feature type="active site" description="N6-AMP-lysine intermediate" evidence="5">
    <location>
        <position position="273"/>
    </location>
</feature>
<feature type="binding site" evidence="2">
    <location>
        <position position="271"/>
    </location>
    <ligand>
        <name>ATP</name>
        <dbReference type="ChEBI" id="CHEBI:30616"/>
    </ligand>
</feature>
<feature type="binding site" evidence="2">
    <location>
        <position position="272"/>
    </location>
    <ligand>
        <name>ATP</name>
        <dbReference type="ChEBI" id="CHEBI:30616"/>
    </ligand>
</feature>
<feature type="binding site" evidence="2">
    <location>
        <position position="273"/>
    </location>
    <ligand>
        <name>ATP</name>
        <dbReference type="ChEBI" id="CHEBI:30616"/>
    </ligand>
</feature>
<feature type="binding site" evidence="2">
    <location>
        <position position="274"/>
    </location>
    <ligand>
        <name>ATP</name>
        <dbReference type="ChEBI" id="CHEBI:30616"/>
    </ligand>
</feature>
<feature type="binding site" evidence="1">
    <location>
        <position position="278"/>
    </location>
    <ligand>
        <name>ATP</name>
        <dbReference type="ChEBI" id="CHEBI:30616"/>
    </ligand>
</feature>
<feature type="binding site" evidence="1">
    <location>
        <position position="331"/>
    </location>
    <ligand>
        <name>ATP</name>
        <dbReference type="ChEBI" id="CHEBI:30616"/>
    </ligand>
</feature>
<feature type="binding site" evidence="3">
    <location>
        <position position="331"/>
    </location>
    <ligand>
        <name>Mg(2+)</name>
        <dbReference type="ChEBI" id="CHEBI:18420"/>
        <label>1</label>
    </ligand>
</feature>
<feature type="binding site" evidence="2">
    <location>
        <position position="345"/>
    </location>
    <ligand>
        <name>ATP</name>
        <dbReference type="ChEBI" id="CHEBI:30616"/>
    </ligand>
</feature>
<feature type="binding site" evidence="2">
    <location>
        <position position="367"/>
    </location>
    <ligand>
        <name>ATP</name>
        <dbReference type="ChEBI" id="CHEBI:30616"/>
    </ligand>
</feature>
<feature type="binding site" evidence="2">
    <location>
        <position position="427"/>
    </location>
    <ligand>
        <name>ATP</name>
        <dbReference type="ChEBI" id="CHEBI:30616"/>
    </ligand>
</feature>
<feature type="binding site" evidence="3">
    <location>
        <position position="427"/>
    </location>
    <ligand>
        <name>Mg(2+)</name>
        <dbReference type="ChEBI" id="CHEBI:18420"/>
        <label>2</label>
    </ligand>
</feature>
<feature type="binding site" evidence="1">
    <location>
        <position position="432"/>
    </location>
    <ligand>
        <name>ATP</name>
        <dbReference type="ChEBI" id="CHEBI:30616"/>
    </ligand>
</feature>
<feature type="binding site" evidence="1">
    <location>
        <position position="449"/>
    </location>
    <ligand>
        <name>ATP</name>
        <dbReference type="ChEBI" id="CHEBI:30616"/>
    </ligand>
</feature>
<feature type="binding site" evidence="2">
    <location>
        <position position="451"/>
    </location>
    <ligand>
        <name>ATP</name>
        <dbReference type="ChEBI" id="CHEBI:30616"/>
    </ligand>
</feature>
<reference key="1">
    <citation type="journal article" date="2011" name="Nat. Biotechnol.">
        <title>The genomic sequence of the Chinese hamster ovary (CHO)-K1 cell line.</title>
        <authorList>
            <person name="Xu X."/>
            <person name="Nagarajan H."/>
            <person name="Lewis N.E."/>
            <person name="Pan S."/>
            <person name="Cai Z."/>
            <person name="Liu X."/>
            <person name="Chen W."/>
            <person name="Xie M."/>
            <person name="Wang W."/>
            <person name="Hammond S."/>
            <person name="Andersen M.R."/>
            <person name="Neff N."/>
            <person name="Passarelli B."/>
            <person name="Koh W."/>
            <person name="Fan H.C."/>
            <person name="Wang J."/>
            <person name="Gui Y."/>
            <person name="Lee K.H."/>
            <person name="Betenbaugh M.J."/>
            <person name="Quake S.R."/>
            <person name="Famili I."/>
            <person name="Palsson B.O."/>
            <person name="Wang J."/>
        </authorList>
    </citation>
    <scope>NUCLEOTIDE SEQUENCE [LARGE SCALE GENOMIC DNA]</scope>
</reference>
<reference key="2">
    <citation type="journal article" date="1999" name="Mutat. Res.">
        <title>Absence of DNA ligase IV protein in XR-1 cells: evidence for stabilization by XRCC4.</title>
        <authorList>
            <person name="Bryans M."/>
            <person name="Valenzano M.C."/>
            <person name="Stamato T.D."/>
        </authorList>
    </citation>
    <scope>INTERACTION WITH XRCC4</scope>
</reference>